<gene>
    <name type="primary">isdA</name>
    <name type="synonym">frpA</name>
    <name type="synonym">stbA</name>
    <name type="ordered locus">MW1012</name>
</gene>
<protein>
    <recommendedName>
        <fullName>Iron-regulated surface determinant protein A</fullName>
    </recommendedName>
    <alternativeName>
        <fullName>Fur-regulated protein A</fullName>
    </alternativeName>
    <alternativeName>
        <fullName>Staphylococcal transferrin-binding protein A</fullName>
    </alternativeName>
</protein>
<name>ISDA_STAAW</name>
<organism>
    <name type="scientific">Staphylococcus aureus (strain MW2)</name>
    <dbReference type="NCBI Taxonomy" id="196620"/>
    <lineage>
        <taxon>Bacteria</taxon>
        <taxon>Bacillati</taxon>
        <taxon>Bacillota</taxon>
        <taxon>Bacilli</taxon>
        <taxon>Bacillales</taxon>
        <taxon>Staphylococcaceae</taxon>
        <taxon>Staphylococcus</taxon>
    </lineage>
</organism>
<dbReference type="EMBL" id="BA000033">
    <property type="protein sequence ID" value="BAB94877.1"/>
    <property type="molecule type" value="Genomic_DNA"/>
</dbReference>
<dbReference type="RefSeq" id="WP_000160859.1">
    <property type="nucleotide sequence ID" value="NC_003923.1"/>
</dbReference>
<dbReference type="SMR" id="Q7A152"/>
<dbReference type="KEGG" id="sam:MW1012"/>
<dbReference type="HOGENOM" id="CLU_068057_0_0_9"/>
<dbReference type="PRO" id="PR:Q7A152"/>
<dbReference type="GO" id="GO:0005576">
    <property type="term" value="C:extracellular region"/>
    <property type="evidence" value="ECO:0007669"/>
    <property type="project" value="UniProtKB-KW"/>
</dbReference>
<dbReference type="GO" id="GO:0046872">
    <property type="term" value="F:metal ion binding"/>
    <property type="evidence" value="ECO:0007669"/>
    <property type="project" value="UniProtKB-KW"/>
</dbReference>
<dbReference type="CDD" id="cd06920">
    <property type="entry name" value="NEAT"/>
    <property type="match status" value="1"/>
</dbReference>
<dbReference type="Gene3D" id="2.60.40.1850">
    <property type="match status" value="1"/>
</dbReference>
<dbReference type="InterPro" id="IPR050436">
    <property type="entry name" value="IsdA"/>
</dbReference>
<dbReference type="InterPro" id="IPR019931">
    <property type="entry name" value="LPXTG_anchor"/>
</dbReference>
<dbReference type="InterPro" id="IPR006635">
    <property type="entry name" value="NEAT_dom"/>
</dbReference>
<dbReference type="InterPro" id="IPR037250">
    <property type="entry name" value="NEAT_dom_sf"/>
</dbReference>
<dbReference type="NCBIfam" id="TIGR01167">
    <property type="entry name" value="LPXTG_anchor"/>
    <property type="match status" value="1"/>
</dbReference>
<dbReference type="PANTHER" id="PTHR37824">
    <property type="entry name" value="IRON-REGULATED SURFACE DETERMINANT PROTEIN C"/>
    <property type="match status" value="1"/>
</dbReference>
<dbReference type="PANTHER" id="PTHR37824:SF1">
    <property type="entry name" value="IRON-REGULATED SURFACE DETERMINANT PROTEIN C"/>
    <property type="match status" value="1"/>
</dbReference>
<dbReference type="Pfam" id="PF00746">
    <property type="entry name" value="Gram_pos_anchor"/>
    <property type="match status" value="1"/>
</dbReference>
<dbReference type="Pfam" id="PF05031">
    <property type="entry name" value="NEAT"/>
    <property type="match status" value="1"/>
</dbReference>
<dbReference type="SMART" id="SM00725">
    <property type="entry name" value="NEAT"/>
    <property type="match status" value="1"/>
</dbReference>
<dbReference type="SUPFAM" id="SSF158911">
    <property type="entry name" value="NEAT domain-like"/>
    <property type="match status" value="1"/>
</dbReference>
<dbReference type="PROSITE" id="PS50847">
    <property type="entry name" value="GRAM_POS_ANCHORING"/>
    <property type="match status" value="1"/>
</dbReference>
<dbReference type="PROSITE" id="PS50978">
    <property type="entry name" value="NEAT"/>
    <property type="match status" value="1"/>
</dbReference>
<accession>Q7A152</accession>
<feature type="signal peptide" evidence="1">
    <location>
        <begin position="1"/>
        <end position="46"/>
    </location>
</feature>
<feature type="chain" id="PRO_0000046094" description="Iron-regulated surface determinant protein A">
    <location>
        <begin position="47"/>
        <end position="316"/>
    </location>
</feature>
<feature type="propeptide" id="PRO_0000046095" description="Removed by sortase A" evidence="5">
    <location>
        <begin position="317"/>
        <end position="350"/>
    </location>
</feature>
<feature type="domain" description="NEAT" evidence="4">
    <location>
        <begin position="62"/>
        <end position="184"/>
    </location>
</feature>
<feature type="region of interest" description="Disordered" evidence="6">
    <location>
        <begin position="188"/>
        <end position="314"/>
    </location>
</feature>
<feature type="short sequence motif" description="LPXTG sorting signal" evidence="5">
    <location>
        <begin position="313"/>
        <end position="317"/>
    </location>
</feature>
<feature type="compositionally biased region" description="Low complexity" evidence="6">
    <location>
        <begin position="203"/>
        <end position="214"/>
    </location>
</feature>
<feature type="compositionally biased region" description="Polar residues" evidence="6">
    <location>
        <begin position="252"/>
        <end position="268"/>
    </location>
</feature>
<feature type="compositionally biased region" description="Polar residues" evidence="6">
    <location>
        <begin position="278"/>
        <end position="296"/>
    </location>
</feature>
<feature type="compositionally biased region" description="Basic and acidic residues" evidence="6">
    <location>
        <begin position="299"/>
        <end position="314"/>
    </location>
</feature>
<feature type="binding site" evidence="1">
    <location>
        <position position="75"/>
    </location>
    <ligand>
        <name>heme</name>
        <dbReference type="ChEBI" id="CHEBI:30413"/>
    </ligand>
</feature>
<feature type="binding site" evidence="1">
    <location>
        <position position="82"/>
    </location>
    <ligand>
        <name>heme</name>
        <dbReference type="ChEBI" id="CHEBI:30413"/>
    </ligand>
</feature>
<feature type="binding site" description="axial binding residue" evidence="3">
    <location>
        <position position="166"/>
    </location>
    <ligand>
        <name>heme</name>
        <dbReference type="ChEBI" id="CHEBI:30413"/>
    </ligand>
    <ligandPart>
        <name>Fe</name>
        <dbReference type="ChEBI" id="CHEBI:18248"/>
    </ligandPart>
</feature>
<feature type="modified residue" description="Pentaglycyl murein peptidoglycan amidated threonine" evidence="5">
    <location>
        <position position="316"/>
    </location>
</feature>
<reference key="1">
    <citation type="journal article" date="2002" name="Lancet">
        <title>Genome and virulence determinants of high virulence community-acquired MRSA.</title>
        <authorList>
            <person name="Baba T."/>
            <person name="Takeuchi F."/>
            <person name="Kuroda M."/>
            <person name="Yuzawa H."/>
            <person name="Aoki K."/>
            <person name="Oguchi A."/>
            <person name="Nagai Y."/>
            <person name="Iwama N."/>
            <person name="Asano K."/>
            <person name="Naimi T."/>
            <person name="Kuroda H."/>
            <person name="Cui L."/>
            <person name="Yamamoto K."/>
            <person name="Hiramatsu K."/>
        </authorList>
    </citation>
    <scope>NUCLEOTIDE SEQUENCE [LARGE SCALE GENOMIC DNA]</scope>
    <source>
        <strain>MW2</strain>
    </source>
</reference>
<reference key="2">
    <citation type="journal article" date="2006" name="Proc. Natl. Acad. Sci. U.S.A.">
        <title>Vaccine assembly from surface proteins of Staphylococcus aureus.</title>
        <authorList>
            <person name="Stranger-Jones Y.K."/>
            <person name="Bae T."/>
            <person name="Schneewind O."/>
        </authorList>
    </citation>
    <scope>BIOTECHNOLOGY</scope>
</reference>
<reference key="3">
    <citation type="journal article" date="2008" name="J. Biol. Chem.">
        <title>Direct hemin transfer from IsdA to IsdC in the iron-regulated surface determinant (Isd) heme acquisition system of Staphylococcus aureus.</title>
        <authorList>
            <person name="Liu M."/>
            <person name="Tanaka W.N."/>
            <person name="Zhu H."/>
            <person name="Xie G."/>
            <person name="Dooley D.M."/>
            <person name="Lei B."/>
        </authorList>
    </citation>
    <scope>FUNCTION IN TRANSFERRING HEMIN TO ISDC</scope>
    <scope>INTERACTION WITH ISDC</scope>
</reference>
<reference key="4">
    <citation type="journal article" date="2008" name="J. Immunol.">
        <title>Neutrophil microbicides induce a pathogen survival response in community-associated methicillin-resistant Staphylococcus aureus.</title>
        <authorList>
            <person name="Palazzolo-Ballance A.M."/>
            <person name="Reniere M.L."/>
            <person name="Braughton K.R."/>
            <person name="Sturdevant D.E."/>
            <person name="Otto M."/>
            <person name="Kreiswirth B.N."/>
            <person name="Skaar E.P."/>
            <person name="DeLeo F.R."/>
        </authorList>
    </citation>
    <scope>FUNCTION IN RESISTANCE TO INNATE HOST DEFENSE</scope>
    <scope>INDUCTION</scope>
</reference>
<sequence>MTKHYLNSKYQSEQRSSAMKKITMGTASIILGSLVYIGADSQQVNAATEATNATNNQSTQVSQATSQPINFQVQKDGSSEKSHMDDYMQHPGKVIKQNNKYYFQTVLNNASFWKEYKFYNANNQELATTVVNDNKKADTRTINVAVEPGYKSLTTKVHIVVPQINYNHRYTTHLEFEKAIPTLADAAKPNNVKPVQPKPAQPKTPTEQTKPVQPKVEKVKPTVTTTSKVEDNHSTKVVSTDTTKDQTKTQTAHTVKTAQTAQEQNKVQTPVKDVATAKSESNNQAVSDNKSQQTNKVTKHNETPKQASKAKELPKTGLTSVDNFISTVAFATLALLGSLSLLLFKRKESK</sequence>
<comment type="function">
    <text evidence="2 8 9">Cell wall-anchored surface receptor that participates in the extraction of heme from oxidized methemoglobin/metHb to enable growth on hemoglobin as a sole iron source (By similarity). Receives heme from IsdB and transfers it to IsdC (PubMed:18184657). Also plays a role in the inhibition of host immune response (PubMed:18097052). Protects S.aureus against the bactericidal protease activity of apolactoferrin. Decreases bacterial cellular hydrophobicity, which renders S.aureus resistant to bactericidal human skin fatty acids as well as to beta-defensins and cathelicidin. Also binds fibronectin and chains B-beta and gamma of fibrinogen, promoting clumping of S.aureus with fibrinogen. Involved in adherence of S.aureus to human desquamated nasal epithelial cells and is required for nasal colonization (By similarity) (PubMed:18097052, PubMed:18184657).</text>
</comment>
<comment type="subunit">
    <text evidence="2 9">Monomer. Interacts with IsdC (PubMed:18184657). Interacts with IsdB (By similarity).</text>
</comment>
<comment type="subcellular location">
    <subcellularLocation>
        <location evidence="2">Secreted</location>
        <location evidence="2">Cell wall</location>
        <topology evidence="2">Peptidoglycan-anchor</topology>
    </subcellularLocation>
    <text evidence="2">Encodes an LPXTG motif-containing sorting signal that targets to the cell wall, which is catalyzed by sortase A.</text>
</comment>
<comment type="induction">
    <text evidence="1 8">Repressed by fur in the presence of iron (By similarity). Transcriptionally up-regulated by hydrogen peroxide.</text>
</comment>
<comment type="domain">
    <text evidence="1">The NEAT domain is responsible for binding Fe(3+) and Fe(2+) heme and fibrinogen. The NEAT domain is an inhibitor of apolactoferrin activity, while the C-domain confers resistance to bovine lactoferricin (By similarity).</text>
</comment>
<comment type="biotechnology">
    <text evidence="7">A combined vaccine containing IsdA, IsdB, SdrD and SdrE afforded significant protection in mice against a lethal challenge with S.aureus Newman or any of the clinical isolates NRS252, N315, NRS248, USA100 and USA400. The immune response elicited by the combined vaccine is greater than the one elicited by its individual components.</text>
</comment>
<comment type="similarity">
    <text evidence="10">Belongs to the IsdA family.</text>
</comment>
<keyword id="KW-0134">Cell wall</keyword>
<keyword id="KW-0349">Heme</keyword>
<keyword id="KW-0408">Iron</keyword>
<keyword id="KW-0479">Metal-binding</keyword>
<keyword id="KW-0572">Peptidoglycan-anchor</keyword>
<keyword id="KW-0964">Secreted</keyword>
<keyword id="KW-0732">Signal</keyword>
<evidence type="ECO:0000250" key="1"/>
<evidence type="ECO:0000250" key="2">
    <source>
        <dbReference type="UniProtKB" id="A6QG31"/>
    </source>
</evidence>
<evidence type="ECO:0000250" key="3">
    <source>
        <dbReference type="UniProtKB" id="Q7A655"/>
    </source>
</evidence>
<evidence type="ECO:0000255" key="4">
    <source>
        <dbReference type="PROSITE-ProRule" id="PRU00337"/>
    </source>
</evidence>
<evidence type="ECO:0000255" key="5">
    <source>
        <dbReference type="PROSITE-ProRule" id="PRU00477"/>
    </source>
</evidence>
<evidence type="ECO:0000256" key="6">
    <source>
        <dbReference type="SAM" id="MobiDB-lite"/>
    </source>
</evidence>
<evidence type="ECO:0000269" key="7">
    <source>
    </source>
</evidence>
<evidence type="ECO:0000269" key="8">
    <source>
    </source>
</evidence>
<evidence type="ECO:0000269" key="9">
    <source>
    </source>
</evidence>
<evidence type="ECO:0000305" key="10"/>
<proteinExistence type="evidence at protein level"/>